<proteinExistence type="evidence at protein level"/>
<comment type="function">
    <text evidence="1">Rho GTPase-activating protein which may be involved in clathrin-mediated endocytosis. GTPase activators for the Rho-type GTPases act by converting them to an inactive GDP-bound state. Has activity toward CDC42 and RAC1 (By similarity).</text>
</comment>
<comment type="subunit">
    <text evidence="1">Interacts with SH3KBP1/CIN85.</text>
</comment>
<comment type="subcellular location">
    <subcellularLocation>
        <location evidence="1">Cytoplasm</location>
    </subcellularLocation>
    <subcellularLocation>
        <location evidence="1">Membrane</location>
        <topology evidence="1">Peripheral membrane protein</topology>
    </subcellularLocation>
</comment>
<comment type="alternative products">
    <event type="alternative splicing"/>
    <isoform>
        <id>Q6ZUM4-1</id>
        <name>1</name>
        <sequence type="displayed"/>
    </isoform>
    <isoform>
        <id>Q6ZUM4-2</id>
        <name>2</name>
        <sequence type="described" ref="VSP_031053"/>
    </isoform>
    <isoform>
        <id>Q6ZUM4-3</id>
        <name>3</name>
        <sequence type="described" ref="VSP_031056"/>
    </isoform>
    <isoform>
        <id>Q6ZUM4-4</id>
        <name>4</name>
        <name>SH3D20</name>
        <sequence type="described" ref="VSP_031054 VSP_031055"/>
    </isoform>
</comment>
<comment type="tissue specificity">
    <text evidence="10">Expressed in germinal center B-cell, spleen, chronic lymphocytic leukemia, pancreatic cancer and lung cancer.</text>
</comment>
<comment type="sequence caution" evidence="14">
    <conflict type="erroneous initiation">
        <sequence resource="EMBL-CDS" id="AAI01389"/>
    </conflict>
    <text>Truncated N-terminus.</text>
</comment>
<comment type="sequence caution" evidence="14">
    <conflict type="erroneous initiation">
        <sequence resource="EMBL-CDS" id="AAI01390"/>
    </conflict>
    <text>Truncated N-terminus.</text>
</comment>
<comment type="sequence caution" evidence="14">
    <conflict type="erroneous initiation">
        <sequence resource="EMBL-CDS" id="AAI01391"/>
    </conflict>
    <text>Truncated N-terminus.</text>
</comment>
<name>RHG27_HUMAN</name>
<sequence length="889" mass="98396">MAADVVGDVYVLVEHPFEYTGKDGRRVAIRPNERYRLLRRSTEHWWHVRREPGGRPFYLPAQYVRELPALGNPAAAAPPGPHPSPAAPEPLAYDYRFVSAAATAGPDGAPEESGGRASSLCGPAQRGAATQRSSLAPGLPACLYLRPAAPVRPAQSLNDLACAAVSPPAGLLGSSGSFKACSVAGSWVCPRPLARSDSENVYEVIQDLHVPPPEESAEQVDDPPEPVYANIERQPRATSPGAAAAPLPSPVWETHTDAGTGRPYYYNPDTGVTTWESPFEAAEGAASPATSPASVDSHVSLETEWGQYWDEESRRVFFYNPLTGETAWEDEAENEPEEELEMQPGLSPGSPGDPRPPTPETDYPESLTSYPEEDYSPVGSFGEPGPTSPLTTPPGWSCHVSQDKQMLYTNHFTQEQWVRLEDPHGKPYFYNPEDSSVRWELPQVPVPAPRSIHKSSQDGDTPAQASPPEEKVPAELDEVGSWEEVSPATAAVRTKTLDKAGVLHRTKTADKGKRLRKKHWSASWTVLEGGVLTFFKDSKTSAAGGLRQPSKFSTPEYTVELRGATLSWAPKDKSSRKNVLELRSRDGSEYLIQHDSEAIISTWHKAIAQGIQELSAELPPEESESSRVDFGSSERLGSWQEKEEDARPNAAAPALGPVGLESDLSKVRHKLRKFLQRRPTLQSLREKGYIKDQVFGCALAALCERERSRVPRFVQQCIRAVEARGLDIDGLYRISGNLATIQKLRYKVDHDERLDLDDGRWEDVHVITGALKLFFRELPEPLFPFSHFRQFIAAIKLQDQARRSRCVRDLVRSLPAPNHDTLRMLFQHLCRVIEHGEQNRMSVQSVAIVFGPTLLRPEVEETSMPMTMVFQNQVVELILQQCADIFPPH</sequence>
<dbReference type="EMBL" id="AF258593">
    <property type="protein sequence ID" value="AAG23796.1"/>
    <property type="molecule type" value="mRNA"/>
</dbReference>
<dbReference type="EMBL" id="AK125535">
    <property type="protein sequence ID" value="BAC86196.1"/>
    <property type="molecule type" value="mRNA"/>
</dbReference>
<dbReference type="EMBL" id="AK290650">
    <property type="protein sequence ID" value="BAF83339.1"/>
    <property type="molecule type" value="mRNA"/>
</dbReference>
<dbReference type="EMBL" id="AC003070">
    <property type="status" value="NOT_ANNOTATED_CDS"/>
    <property type="molecule type" value="Genomic_DNA"/>
</dbReference>
<dbReference type="EMBL" id="AC091132">
    <property type="status" value="NOT_ANNOTATED_CDS"/>
    <property type="molecule type" value="Genomic_DNA"/>
</dbReference>
<dbReference type="EMBL" id="BC067345">
    <property type="protein sequence ID" value="AAH67345.1"/>
    <property type="molecule type" value="mRNA"/>
</dbReference>
<dbReference type="EMBL" id="BC101388">
    <property type="protein sequence ID" value="AAI01389.1"/>
    <property type="status" value="ALT_INIT"/>
    <property type="molecule type" value="mRNA"/>
</dbReference>
<dbReference type="EMBL" id="BC101389">
    <property type="protein sequence ID" value="AAI01390.1"/>
    <property type="status" value="ALT_INIT"/>
    <property type="molecule type" value="mRNA"/>
</dbReference>
<dbReference type="EMBL" id="BC101390">
    <property type="protein sequence ID" value="AAI01391.1"/>
    <property type="status" value="ALT_INIT"/>
    <property type="molecule type" value="mRNA"/>
</dbReference>
<dbReference type="EMBL" id="BC101391">
    <property type="protein sequence ID" value="AAI01392.3"/>
    <property type="molecule type" value="mRNA"/>
</dbReference>
<dbReference type="CCDS" id="CCDS11498.1">
    <molecule id="Q6ZUM4-2"/>
</dbReference>
<dbReference type="CCDS" id="CCDS32670.1">
    <molecule id="Q6ZUM4-4"/>
</dbReference>
<dbReference type="CCDS" id="CCDS74082.1">
    <molecule id="Q6ZUM4-1"/>
</dbReference>
<dbReference type="RefSeq" id="NP_001269219.1">
    <molecule id="Q6ZUM4-1"/>
    <property type="nucleotide sequence ID" value="NM_001282290.2"/>
</dbReference>
<dbReference type="RefSeq" id="NP_777579.2">
    <molecule id="Q6ZUM4-4"/>
    <property type="nucleotide sequence ID" value="NM_174919.4"/>
</dbReference>
<dbReference type="RefSeq" id="NP_954976.1">
    <molecule id="Q6ZUM4-2"/>
    <property type="nucleotide sequence ID" value="NM_199282.3"/>
</dbReference>
<dbReference type="RefSeq" id="XP_006721808.1">
    <property type="nucleotide sequence ID" value="XM_006721745.2"/>
</dbReference>
<dbReference type="RefSeq" id="XP_047291499.1">
    <molecule id="Q6ZUM4-1"/>
    <property type="nucleotide sequence ID" value="XM_047435543.1"/>
</dbReference>
<dbReference type="RefSeq" id="XP_047291507.1">
    <molecule id="Q6ZUM4-2"/>
    <property type="nucleotide sequence ID" value="XM_047435551.1"/>
</dbReference>
<dbReference type="RefSeq" id="XP_054171335.1">
    <molecule id="Q6ZUM4-2"/>
    <property type="nucleotide sequence ID" value="XM_054315360.1"/>
</dbReference>
<dbReference type="RefSeq" id="XP_054186064.1">
    <molecule id="Q6ZUM4-1"/>
    <property type="nucleotide sequence ID" value="XM_054330089.1"/>
</dbReference>
<dbReference type="RefSeq" id="XP_054186075.1">
    <molecule id="Q6ZUM4-2"/>
    <property type="nucleotide sequence ID" value="XM_054330100.1"/>
</dbReference>
<dbReference type="PDB" id="3PP2">
    <property type="method" value="X-ray"/>
    <property type="resolution" value="1.42 A"/>
    <property type="chains" value="A/B=491-613"/>
</dbReference>
<dbReference type="PDBsum" id="3PP2"/>
<dbReference type="SMR" id="Q6ZUM4"/>
<dbReference type="BioGRID" id="128369">
    <property type="interactions" value="15"/>
</dbReference>
<dbReference type="FunCoup" id="Q6ZUM4">
    <property type="interactions" value="836"/>
</dbReference>
<dbReference type="IntAct" id="Q6ZUM4">
    <property type="interactions" value="6"/>
</dbReference>
<dbReference type="STRING" id="9606.ENSP00000403323"/>
<dbReference type="GlyCosmos" id="Q6ZUM4">
    <property type="glycosylation" value="1 site, 2 glycans"/>
</dbReference>
<dbReference type="GlyGen" id="Q6ZUM4">
    <property type="glycosylation" value="3 sites, 2 O-linked glycans (1 site)"/>
</dbReference>
<dbReference type="iPTMnet" id="Q6ZUM4"/>
<dbReference type="PhosphoSitePlus" id="Q6ZUM4"/>
<dbReference type="BioMuta" id="ARHGAP27"/>
<dbReference type="DMDM" id="300669680"/>
<dbReference type="jPOST" id="Q6ZUM4"/>
<dbReference type="MassIVE" id="Q6ZUM4"/>
<dbReference type="PaxDb" id="9606-ENSP00000403323"/>
<dbReference type="PeptideAtlas" id="Q6ZUM4"/>
<dbReference type="ProteomicsDB" id="68341">
    <molecule id="Q6ZUM4-1"/>
</dbReference>
<dbReference type="ProteomicsDB" id="68342">
    <molecule id="Q6ZUM4-2"/>
</dbReference>
<dbReference type="ProteomicsDB" id="68343">
    <molecule id="Q6ZUM4-3"/>
</dbReference>
<dbReference type="ProteomicsDB" id="68344">
    <molecule id="Q6ZUM4-4"/>
</dbReference>
<dbReference type="Pumba" id="Q6ZUM4"/>
<dbReference type="Antibodypedia" id="49843">
    <property type="antibodies" value="134 antibodies from 23 providers"/>
</dbReference>
<dbReference type="DNASU" id="201176"/>
<dbReference type="Ensembl" id="ENST00000290470.3">
    <molecule id="Q6ZUM4-4"/>
    <property type="protein sequence ID" value="ENSP00000290470.3"/>
    <property type="gene ID" value="ENSG00000159314.13"/>
</dbReference>
<dbReference type="Ensembl" id="ENST00000376922.6">
    <molecule id="Q6ZUM4-2"/>
    <property type="protein sequence ID" value="ENSP00000366121.2"/>
    <property type="gene ID" value="ENSG00000159314.13"/>
</dbReference>
<dbReference type="Ensembl" id="ENST00000528273.5">
    <molecule id="Q6ZUM4-4"/>
    <property type="protein sequence ID" value="ENSP00000436137.1"/>
    <property type="gene ID" value="ENSG00000159314.13"/>
</dbReference>
<dbReference type="Ensembl" id="ENST00000610792.3">
    <molecule id="Q6ZUM4-1"/>
    <property type="protein sequence ID" value="ENSP00000477741.1"/>
    <property type="gene ID" value="ENSG00000276907.4"/>
</dbReference>
<dbReference type="Ensembl" id="ENST00000611188.1">
    <molecule id="Q6ZUM4-4"/>
    <property type="protein sequence ID" value="ENSP00000481302.1"/>
    <property type="gene ID" value="ENSG00000276907.4"/>
</dbReference>
<dbReference type="Ensembl" id="ENST00000612916.3">
    <molecule id="Q6ZUM4-2"/>
    <property type="protein sequence ID" value="ENSP00000480582.1"/>
    <property type="gene ID" value="ENSG00000276836.4"/>
</dbReference>
<dbReference type="Ensembl" id="ENST00000616021.2">
    <molecule id="Q6ZUM4-2"/>
    <property type="protein sequence ID" value="ENSP00000478738.1"/>
    <property type="gene ID" value="ENSG00000276907.4"/>
</dbReference>
<dbReference type="Ensembl" id="ENST00000633003.1">
    <molecule id="Q6ZUM4-4"/>
    <property type="protein sequence ID" value="ENSP00000487991.1"/>
    <property type="gene ID" value="ENSG00000276907.4"/>
</dbReference>
<dbReference type="Ensembl" id="ENST00000685559.1">
    <molecule id="Q6ZUM4-1"/>
    <property type="protein sequence ID" value="ENSP00000509127.1"/>
    <property type="gene ID" value="ENSG00000159314.13"/>
</dbReference>
<dbReference type="GeneID" id="201176"/>
<dbReference type="KEGG" id="hsa:201176"/>
<dbReference type="MANE-Select" id="ENST00000685559.1">
    <property type="protein sequence ID" value="ENSP00000509127.1"/>
    <property type="RefSeq nucleotide sequence ID" value="NM_001282290.2"/>
    <property type="RefSeq protein sequence ID" value="NP_001269219.1"/>
</dbReference>
<dbReference type="UCSC" id="uc002iix.4">
    <molecule id="Q6ZUM4-1"/>
    <property type="organism name" value="human"/>
</dbReference>
<dbReference type="AGR" id="HGNC:31813"/>
<dbReference type="CTD" id="201176"/>
<dbReference type="DisGeNET" id="201176"/>
<dbReference type="GeneCards" id="ARHGAP27"/>
<dbReference type="HGNC" id="HGNC:31813">
    <property type="gene designation" value="ARHGAP27"/>
</dbReference>
<dbReference type="HPA" id="ENSG00000159314">
    <property type="expression patterns" value="Tissue enhanced (esophagus)"/>
</dbReference>
<dbReference type="MIM" id="610591">
    <property type="type" value="gene"/>
</dbReference>
<dbReference type="neXtProt" id="NX_Q6ZUM4"/>
<dbReference type="OpenTargets" id="ENSG00000159314"/>
<dbReference type="PharmGKB" id="PA134873327"/>
<dbReference type="VEuPathDB" id="HostDB:ENSG00000159314"/>
<dbReference type="eggNOG" id="KOG1450">
    <property type="taxonomic scope" value="Eukaryota"/>
</dbReference>
<dbReference type="eggNOG" id="KOG4269">
    <property type="taxonomic scope" value="Eukaryota"/>
</dbReference>
<dbReference type="GeneTree" id="ENSGT00950000182860"/>
<dbReference type="HOGENOM" id="CLU_1140156_0_0_1"/>
<dbReference type="InParanoid" id="Q6ZUM4"/>
<dbReference type="OMA" id="NNWEIHT"/>
<dbReference type="OrthoDB" id="79452at2759"/>
<dbReference type="PAN-GO" id="Q6ZUM4">
    <property type="GO annotations" value="2 GO annotations based on evolutionary models"/>
</dbReference>
<dbReference type="PhylomeDB" id="Q6ZUM4"/>
<dbReference type="TreeFam" id="TF329345"/>
<dbReference type="PathwayCommons" id="Q6ZUM4"/>
<dbReference type="Reactome" id="R-HSA-9013148">
    <property type="pathway name" value="CDC42 GTPase cycle"/>
</dbReference>
<dbReference type="Reactome" id="R-HSA-9013149">
    <property type="pathway name" value="RAC1 GTPase cycle"/>
</dbReference>
<dbReference type="SignaLink" id="Q6ZUM4"/>
<dbReference type="SIGNOR" id="Q6ZUM4"/>
<dbReference type="BioGRID-ORCS" id="201176">
    <property type="hits" value="19 hits in 1144 CRISPR screens"/>
</dbReference>
<dbReference type="ChiTaRS" id="ARHGAP27">
    <property type="organism name" value="human"/>
</dbReference>
<dbReference type="EvolutionaryTrace" id="Q6ZUM4"/>
<dbReference type="GenomeRNAi" id="201176"/>
<dbReference type="Pharos" id="Q6ZUM4">
    <property type="development level" value="Tbio"/>
</dbReference>
<dbReference type="PRO" id="PR:Q6ZUM4"/>
<dbReference type="Proteomes" id="UP000005640">
    <property type="component" value="Chromosome 17"/>
</dbReference>
<dbReference type="RNAct" id="Q6ZUM4">
    <property type="molecule type" value="protein"/>
</dbReference>
<dbReference type="Bgee" id="ENSG00000159314">
    <property type="expression patterns" value="Expressed in lower esophagus mucosa and 95 other cell types or tissues"/>
</dbReference>
<dbReference type="ExpressionAtlas" id="Q6ZUM4">
    <property type="expression patterns" value="baseline and differential"/>
</dbReference>
<dbReference type="GO" id="GO:0005737">
    <property type="term" value="C:cytoplasm"/>
    <property type="evidence" value="ECO:0000318"/>
    <property type="project" value="GO_Central"/>
</dbReference>
<dbReference type="GO" id="GO:0005829">
    <property type="term" value="C:cytosol"/>
    <property type="evidence" value="ECO:0000304"/>
    <property type="project" value="Reactome"/>
</dbReference>
<dbReference type="GO" id="GO:0005886">
    <property type="term" value="C:plasma membrane"/>
    <property type="evidence" value="ECO:0000318"/>
    <property type="project" value="GO_Central"/>
</dbReference>
<dbReference type="GO" id="GO:0051015">
    <property type="term" value="F:actin filament binding"/>
    <property type="evidence" value="ECO:0007669"/>
    <property type="project" value="Ensembl"/>
</dbReference>
<dbReference type="GO" id="GO:0005096">
    <property type="term" value="F:GTPase activator activity"/>
    <property type="evidence" value="ECO:0000250"/>
    <property type="project" value="HGNC-UCL"/>
</dbReference>
<dbReference type="GO" id="GO:0017124">
    <property type="term" value="F:SH3 domain binding"/>
    <property type="evidence" value="ECO:0000250"/>
    <property type="project" value="HGNC-UCL"/>
</dbReference>
<dbReference type="GO" id="GO:0051291">
    <property type="term" value="P:protein heterooligomerization"/>
    <property type="evidence" value="ECO:0007669"/>
    <property type="project" value="Ensembl"/>
</dbReference>
<dbReference type="GO" id="GO:0006898">
    <property type="term" value="P:receptor-mediated endocytosis"/>
    <property type="evidence" value="ECO:0000250"/>
    <property type="project" value="HGNC-UCL"/>
</dbReference>
<dbReference type="GO" id="GO:0051056">
    <property type="term" value="P:regulation of small GTPase mediated signal transduction"/>
    <property type="evidence" value="ECO:0000304"/>
    <property type="project" value="Reactome"/>
</dbReference>
<dbReference type="GO" id="GO:0007266">
    <property type="term" value="P:Rho protein signal transduction"/>
    <property type="evidence" value="ECO:0000250"/>
    <property type="project" value="HGNC-UCL"/>
</dbReference>
<dbReference type="GO" id="GO:0007264">
    <property type="term" value="P:small GTPase-mediated signal transduction"/>
    <property type="evidence" value="ECO:0000318"/>
    <property type="project" value="GO_Central"/>
</dbReference>
<dbReference type="CDD" id="cd13233">
    <property type="entry name" value="PH_ARHGAP9-like"/>
    <property type="match status" value="1"/>
</dbReference>
<dbReference type="CDD" id="cd04403">
    <property type="entry name" value="RhoGAP_ARHGAP27_15_12_9"/>
    <property type="match status" value="1"/>
</dbReference>
<dbReference type="CDD" id="cd12069">
    <property type="entry name" value="SH3_ARHGAP27"/>
    <property type="match status" value="1"/>
</dbReference>
<dbReference type="CDD" id="cd00201">
    <property type="entry name" value="WW"/>
    <property type="match status" value="3"/>
</dbReference>
<dbReference type="FunFam" id="1.10.555.10:FF:000003">
    <property type="entry name" value="Putative rho GTPase-activating protein 12"/>
    <property type="match status" value="1"/>
</dbReference>
<dbReference type="FunFam" id="2.20.70.10:FF:000061">
    <property type="entry name" value="Rho GTPase activating protein 27"/>
    <property type="match status" value="1"/>
</dbReference>
<dbReference type="FunFam" id="2.20.70.10:FF:000065">
    <property type="entry name" value="Rho GTPase activating protein 27"/>
    <property type="match status" value="1"/>
</dbReference>
<dbReference type="FunFam" id="2.30.29.30:FF:000206">
    <property type="entry name" value="Rho GTPase activating protein 27"/>
    <property type="match status" value="1"/>
</dbReference>
<dbReference type="Gene3D" id="2.20.70.10">
    <property type="match status" value="2"/>
</dbReference>
<dbReference type="Gene3D" id="2.30.29.30">
    <property type="entry name" value="Pleckstrin-homology domain (PH domain)/Phosphotyrosine-binding domain (PTB)"/>
    <property type="match status" value="1"/>
</dbReference>
<dbReference type="Gene3D" id="1.10.555.10">
    <property type="entry name" value="Rho GTPase activation protein"/>
    <property type="match status" value="1"/>
</dbReference>
<dbReference type="Gene3D" id="2.30.30.40">
    <property type="entry name" value="SH3 Domains"/>
    <property type="match status" value="1"/>
</dbReference>
<dbReference type="InterPro" id="IPR011993">
    <property type="entry name" value="PH-like_dom_sf"/>
</dbReference>
<dbReference type="InterPro" id="IPR001849">
    <property type="entry name" value="PH_domain"/>
</dbReference>
<dbReference type="InterPro" id="IPR011047">
    <property type="entry name" value="Quinoprotein_ADH-like_sf"/>
</dbReference>
<dbReference type="InterPro" id="IPR050729">
    <property type="entry name" value="Rho-GAP"/>
</dbReference>
<dbReference type="InterPro" id="IPR008936">
    <property type="entry name" value="Rho_GTPase_activation_prot"/>
</dbReference>
<dbReference type="InterPro" id="IPR000198">
    <property type="entry name" value="RhoGAP_dom"/>
</dbReference>
<dbReference type="InterPro" id="IPR036028">
    <property type="entry name" value="SH3-like_dom_sf"/>
</dbReference>
<dbReference type="InterPro" id="IPR001452">
    <property type="entry name" value="SH3_domain"/>
</dbReference>
<dbReference type="InterPro" id="IPR001202">
    <property type="entry name" value="WW_dom"/>
</dbReference>
<dbReference type="InterPro" id="IPR036020">
    <property type="entry name" value="WW_dom_sf"/>
</dbReference>
<dbReference type="PANTHER" id="PTHR23176:SF104">
    <property type="entry name" value="RHO GTPASE-ACTIVATING PROTEIN 27"/>
    <property type="match status" value="1"/>
</dbReference>
<dbReference type="PANTHER" id="PTHR23176">
    <property type="entry name" value="RHO/RAC/CDC GTPASE-ACTIVATING PROTEIN"/>
    <property type="match status" value="1"/>
</dbReference>
<dbReference type="Pfam" id="PF00169">
    <property type="entry name" value="PH"/>
    <property type="match status" value="1"/>
</dbReference>
<dbReference type="Pfam" id="PF00620">
    <property type="entry name" value="RhoGAP"/>
    <property type="match status" value="1"/>
</dbReference>
<dbReference type="Pfam" id="PF00397">
    <property type="entry name" value="WW"/>
    <property type="match status" value="2"/>
</dbReference>
<dbReference type="SMART" id="SM00233">
    <property type="entry name" value="PH"/>
    <property type="match status" value="1"/>
</dbReference>
<dbReference type="SMART" id="SM00324">
    <property type="entry name" value="RhoGAP"/>
    <property type="match status" value="1"/>
</dbReference>
<dbReference type="SMART" id="SM00456">
    <property type="entry name" value="WW"/>
    <property type="match status" value="3"/>
</dbReference>
<dbReference type="SUPFAM" id="SSF48350">
    <property type="entry name" value="GTPase activation domain, GAP"/>
    <property type="match status" value="1"/>
</dbReference>
<dbReference type="SUPFAM" id="SSF50729">
    <property type="entry name" value="PH domain-like"/>
    <property type="match status" value="1"/>
</dbReference>
<dbReference type="SUPFAM" id="SSF50998">
    <property type="entry name" value="Quinoprotein alcohol dehydrogenase-like"/>
    <property type="match status" value="1"/>
</dbReference>
<dbReference type="SUPFAM" id="SSF50044">
    <property type="entry name" value="SH3-domain"/>
    <property type="match status" value="1"/>
</dbReference>
<dbReference type="SUPFAM" id="SSF51045">
    <property type="entry name" value="WW domain"/>
    <property type="match status" value="2"/>
</dbReference>
<dbReference type="PROSITE" id="PS50003">
    <property type="entry name" value="PH_DOMAIN"/>
    <property type="match status" value="1"/>
</dbReference>
<dbReference type="PROSITE" id="PS50238">
    <property type="entry name" value="RHOGAP"/>
    <property type="match status" value="1"/>
</dbReference>
<dbReference type="PROSITE" id="PS50002">
    <property type="entry name" value="SH3"/>
    <property type="match status" value="1"/>
</dbReference>
<dbReference type="PROSITE" id="PS50020">
    <property type="entry name" value="WW_DOMAIN_2"/>
    <property type="match status" value="3"/>
</dbReference>
<organism>
    <name type="scientific">Homo sapiens</name>
    <name type="common">Human</name>
    <dbReference type="NCBI Taxonomy" id="9606"/>
    <lineage>
        <taxon>Eukaryota</taxon>
        <taxon>Metazoa</taxon>
        <taxon>Chordata</taxon>
        <taxon>Craniata</taxon>
        <taxon>Vertebrata</taxon>
        <taxon>Euteleostomi</taxon>
        <taxon>Mammalia</taxon>
        <taxon>Eutheria</taxon>
        <taxon>Euarchontoglires</taxon>
        <taxon>Primates</taxon>
        <taxon>Haplorrhini</taxon>
        <taxon>Catarrhini</taxon>
        <taxon>Hominidae</taxon>
        <taxon>Homo</taxon>
    </lineage>
</organism>
<gene>
    <name evidence="15" type="primary">ARHGAP27</name>
    <name type="synonym">CAMGAP1</name>
    <name evidence="15" type="synonym">SH3D20</name>
    <name type="ORF">PP905</name>
</gene>
<feature type="chain" id="PRO_0000317578" description="Rho GTPase-activating protein 27">
    <location>
        <begin position="1"/>
        <end position="889"/>
    </location>
</feature>
<feature type="domain" description="SH3" evidence="6">
    <location>
        <begin position="6"/>
        <end position="69"/>
    </location>
</feature>
<feature type="domain" description="WW 1" evidence="7">
    <location>
        <begin position="246"/>
        <end position="280"/>
    </location>
</feature>
<feature type="domain" description="WW 2" evidence="7">
    <location>
        <begin position="299"/>
        <end position="333"/>
    </location>
</feature>
<feature type="domain" description="WW 3" evidence="7">
    <location>
        <begin position="411"/>
        <end position="444"/>
    </location>
</feature>
<feature type="domain" description="PH" evidence="4">
    <location>
        <begin position="496"/>
        <end position="612"/>
    </location>
</feature>
<feature type="domain" description="Rho-GAP" evidence="5">
    <location>
        <begin position="697"/>
        <end position="886"/>
    </location>
</feature>
<feature type="region of interest" description="Disordered" evidence="8">
    <location>
        <begin position="104"/>
        <end position="132"/>
    </location>
</feature>
<feature type="region of interest" description="Disordered" evidence="8">
    <location>
        <begin position="329"/>
        <end position="397"/>
    </location>
</feature>
<feature type="region of interest" description="Disordered" evidence="8">
    <location>
        <begin position="447"/>
        <end position="474"/>
    </location>
</feature>
<feature type="region of interest" description="Disordered" evidence="8">
    <location>
        <begin position="617"/>
        <end position="655"/>
    </location>
</feature>
<feature type="compositionally biased region" description="Acidic residues" evidence="8">
    <location>
        <begin position="329"/>
        <end position="341"/>
    </location>
</feature>
<feature type="compositionally biased region" description="Low complexity" evidence="8">
    <location>
        <begin position="383"/>
        <end position="395"/>
    </location>
</feature>
<feature type="site" description="Arginine finger; crucial for GTP hydrolysis by stabilizing the transition state" evidence="5">
    <location>
        <position position="733"/>
    </location>
</feature>
<feature type="modified residue" description="Phosphoserine" evidence="3">
    <location>
        <position position="156"/>
    </location>
</feature>
<feature type="modified residue" description="Phosphoserine" evidence="2">
    <location>
        <position position="216"/>
    </location>
</feature>
<feature type="modified residue" description="Phosphoserine" evidence="16">
    <location>
        <position position="249"/>
    </location>
</feature>
<feature type="modified residue" description="Phosphoserine" evidence="2">
    <location>
        <position position="347"/>
    </location>
</feature>
<feature type="modified residue" description="Phosphoserine" evidence="2">
    <location>
        <position position="456"/>
    </location>
</feature>
<feature type="modified residue" description="Phosphothreonine" evidence="2">
    <location>
        <position position="461"/>
    </location>
</feature>
<feature type="modified residue" description="Phosphoserine" evidence="16">
    <location>
        <position position="466"/>
    </location>
</feature>
<feature type="splice variant" id="VSP_031053" description="In isoform 2." evidence="11">
    <location>
        <begin position="1"/>
        <end position="341"/>
    </location>
</feature>
<feature type="splice variant" id="VSP_031054" description="In isoform 4." evidence="12 13">
    <original>DDPPEPVYANIERQPRATSPGAAAAPLPSPVWETHTDAGTGRP</original>
    <variation>PPRALGRGGGWRARDRARTEPGRKETRSAQRRARRPPLSEDFG</variation>
    <location>
        <begin position="221"/>
        <end position="263"/>
    </location>
</feature>
<feature type="splice variant" id="VSP_031055" description="In isoform 4." evidence="12 13">
    <location>
        <begin position="264"/>
        <end position="889"/>
    </location>
</feature>
<feature type="splice variant" id="VSP_031056" description="In isoform 3." evidence="12">
    <location>
        <begin position="416"/>
        <end position="442"/>
    </location>
</feature>
<feature type="sequence variant" id="VAR_038551" description="In dbSNP:rs117139057." evidence="9">
    <original>H</original>
    <variation>Q</variation>
    <location>
        <position position="889"/>
    </location>
</feature>
<feature type="sequence conflict" description="In Ref. 1; AAG23796." evidence="14" ref="1">
    <original>S</original>
    <variation>N</variation>
    <location>
        <position position="41"/>
    </location>
</feature>
<feature type="sequence conflict" description="In Ref. 2; BAF83339." evidence="14" ref="2">
    <original>C</original>
    <variation>R</variation>
    <location>
        <position position="162"/>
    </location>
</feature>
<feature type="sequence conflict" description="In Ref. 4; AAH67345." evidence="14" ref="4">
    <original>P</original>
    <variation>R</variation>
    <location>
        <position position="213"/>
    </location>
</feature>
<feature type="strand" evidence="17">
    <location>
        <begin position="499"/>
        <end position="510"/>
    </location>
</feature>
<feature type="strand" evidence="17">
    <location>
        <begin position="521"/>
        <end position="528"/>
    </location>
</feature>
<feature type="strand" evidence="17">
    <location>
        <begin position="531"/>
        <end position="536"/>
    </location>
</feature>
<feature type="helix" evidence="17">
    <location>
        <begin position="549"/>
        <end position="552"/>
    </location>
</feature>
<feature type="strand" evidence="17">
    <location>
        <begin position="554"/>
        <end position="560"/>
    </location>
</feature>
<feature type="strand" evidence="17">
    <location>
        <begin position="565"/>
        <end position="568"/>
    </location>
</feature>
<feature type="helix" evidence="17">
    <location>
        <begin position="571"/>
        <end position="573"/>
    </location>
</feature>
<feature type="strand" evidence="17">
    <location>
        <begin position="575"/>
        <end position="583"/>
    </location>
</feature>
<feature type="strand" evidence="17">
    <location>
        <begin position="589"/>
        <end position="593"/>
    </location>
</feature>
<feature type="helix" evidence="17">
    <location>
        <begin position="597"/>
        <end position="611"/>
    </location>
</feature>
<accession>Q6ZUM4</accession>
<accession>A4FU35</accession>
<accession>A8K3N5</accession>
<accession>C9JTF3</accession>
<accession>Q494U0</accession>
<accession>Q6NWZ8</accession>
<accession>Q8WY58</accession>
<evidence type="ECO:0000250" key="1"/>
<evidence type="ECO:0000250" key="2">
    <source>
        <dbReference type="UniProtKB" id="A2AB59"/>
    </source>
</evidence>
<evidence type="ECO:0000250" key="3">
    <source>
        <dbReference type="UniProtKB" id="Q6TLK4"/>
    </source>
</evidence>
<evidence type="ECO:0000255" key="4">
    <source>
        <dbReference type="PROSITE-ProRule" id="PRU00145"/>
    </source>
</evidence>
<evidence type="ECO:0000255" key="5">
    <source>
        <dbReference type="PROSITE-ProRule" id="PRU00172"/>
    </source>
</evidence>
<evidence type="ECO:0000255" key="6">
    <source>
        <dbReference type="PROSITE-ProRule" id="PRU00192"/>
    </source>
</evidence>
<evidence type="ECO:0000255" key="7">
    <source>
        <dbReference type="PROSITE-ProRule" id="PRU00224"/>
    </source>
</evidence>
<evidence type="ECO:0000256" key="8">
    <source>
        <dbReference type="SAM" id="MobiDB-lite"/>
    </source>
</evidence>
<evidence type="ECO:0000269" key="9">
    <source>
    </source>
</evidence>
<evidence type="ECO:0000269" key="10">
    <source>
    </source>
</evidence>
<evidence type="ECO:0000303" key="11">
    <source>
    </source>
</evidence>
<evidence type="ECO:0000303" key="12">
    <source>
    </source>
</evidence>
<evidence type="ECO:0000303" key="13">
    <source>
    </source>
</evidence>
<evidence type="ECO:0000305" key="14"/>
<evidence type="ECO:0000312" key="15">
    <source>
        <dbReference type="HGNC" id="HGNC:31813"/>
    </source>
</evidence>
<evidence type="ECO:0007744" key="16">
    <source>
    </source>
</evidence>
<evidence type="ECO:0007829" key="17">
    <source>
        <dbReference type="PDB" id="3PP2"/>
    </source>
</evidence>
<reference key="1">
    <citation type="journal article" date="2004" name="Proc. Natl. Acad. Sci. U.S.A.">
        <title>Large-scale cDNA transfection screening for genes related to cancer development and progression.</title>
        <authorList>
            <person name="Wan D."/>
            <person name="Gong Y."/>
            <person name="Qin W."/>
            <person name="Zhang P."/>
            <person name="Li J."/>
            <person name="Wei L."/>
            <person name="Zhou X."/>
            <person name="Li H."/>
            <person name="Qiu X."/>
            <person name="Zhong F."/>
            <person name="He L."/>
            <person name="Yu J."/>
            <person name="Yao G."/>
            <person name="Jiang H."/>
            <person name="Qian L."/>
            <person name="Yu Y."/>
            <person name="Shu H."/>
            <person name="Chen X."/>
            <person name="Xu H."/>
            <person name="Guo M."/>
            <person name="Pan Z."/>
            <person name="Chen Y."/>
            <person name="Ge C."/>
            <person name="Yang S."/>
            <person name="Gu J."/>
        </authorList>
    </citation>
    <scope>NUCLEOTIDE SEQUENCE [LARGE SCALE MRNA] (ISOFORM 4)</scope>
</reference>
<reference key="2">
    <citation type="journal article" date="2004" name="Nat. Genet.">
        <title>Complete sequencing and characterization of 21,243 full-length human cDNAs.</title>
        <authorList>
            <person name="Ota T."/>
            <person name="Suzuki Y."/>
            <person name="Nishikawa T."/>
            <person name="Otsuki T."/>
            <person name="Sugiyama T."/>
            <person name="Irie R."/>
            <person name="Wakamatsu A."/>
            <person name="Hayashi K."/>
            <person name="Sato H."/>
            <person name="Nagai K."/>
            <person name="Kimura K."/>
            <person name="Makita H."/>
            <person name="Sekine M."/>
            <person name="Obayashi M."/>
            <person name="Nishi T."/>
            <person name="Shibahara T."/>
            <person name="Tanaka T."/>
            <person name="Ishii S."/>
            <person name="Yamamoto J."/>
            <person name="Saito K."/>
            <person name="Kawai Y."/>
            <person name="Isono Y."/>
            <person name="Nakamura Y."/>
            <person name="Nagahari K."/>
            <person name="Murakami K."/>
            <person name="Yasuda T."/>
            <person name="Iwayanagi T."/>
            <person name="Wagatsuma M."/>
            <person name="Shiratori A."/>
            <person name="Sudo H."/>
            <person name="Hosoiri T."/>
            <person name="Kaku Y."/>
            <person name="Kodaira H."/>
            <person name="Kondo H."/>
            <person name="Sugawara M."/>
            <person name="Takahashi M."/>
            <person name="Kanda K."/>
            <person name="Yokoi T."/>
            <person name="Furuya T."/>
            <person name="Kikkawa E."/>
            <person name="Omura Y."/>
            <person name="Abe K."/>
            <person name="Kamihara K."/>
            <person name="Katsuta N."/>
            <person name="Sato K."/>
            <person name="Tanikawa M."/>
            <person name="Yamazaki M."/>
            <person name="Ninomiya K."/>
            <person name="Ishibashi T."/>
            <person name="Yamashita H."/>
            <person name="Murakawa K."/>
            <person name="Fujimori K."/>
            <person name="Tanai H."/>
            <person name="Kimata M."/>
            <person name="Watanabe M."/>
            <person name="Hiraoka S."/>
            <person name="Chiba Y."/>
            <person name="Ishida S."/>
            <person name="Ono Y."/>
            <person name="Takiguchi S."/>
            <person name="Watanabe S."/>
            <person name="Yosida M."/>
            <person name="Hotuta T."/>
            <person name="Kusano J."/>
            <person name="Kanehori K."/>
            <person name="Takahashi-Fujii A."/>
            <person name="Hara H."/>
            <person name="Tanase T.-O."/>
            <person name="Nomura Y."/>
            <person name="Togiya S."/>
            <person name="Komai F."/>
            <person name="Hara R."/>
            <person name="Takeuchi K."/>
            <person name="Arita M."/>
            <person name="Imose N."/>
            <person name="Musashino K."/>
            <person name="Yuuki H."/>
            <person name="Oshima A."/>
            <person name="Sasaki N."/>
            <person name="Aotsuka S."/>
            <person name="Yoshikawa Y."/>
            <person name="Matsunawa H."/>
            <person name="Ichihara T."/>
            <person name="Shiohata N."/>
            <person name="Sano S."/>
            <person name="Moriya S."/>
            <person name="Momiyama H."/>
            <person name="Satoh N."/>
            <person name="Takami S."/>
            <person name="Terashima Y."/>
            <person name="Suzuki O."/>
            <person name="Nakagawa S."/>
            <person name="Senoh A."/>
            <person name="Mizoguchi H."/>
            <person name="Goto Y."/>
            <person name="Shimizu F."/>
            <person name="Wakebe H."/>
            <person name="Hishigaki H."/>
            <person name="Watanabe T."/>
            <person name="Sugiyama A."/>
            <person name="Takemoto M."/>
            <person name="Kawakami B."/>
            <person name="Yamazaki M."/>
            <person name="Watanabe K."/>
            <person name="Kumagai A."/>
            <person name="Itakura S."/>
            <person name="Fukuzumi Y."/>
            <person name="Fujimori Y."/>
            <person name="Komiyama M."/>
            <person name="Tashiro H."/>
            <person name="Tanigami A."/>
            <person name="Fujiwara T."/>
            <person name="Ono T."/>
            <person name="Yamada K."/>
            <person name="Fujii Y."/>
            <person name="Ozaki K."/>
            <person name="Hirao M."/>
            <person name="Ohmori Y."/>
            <person name="Kawabata A."/>
            <person name="Hikiji T."/>
            <person name="Kobatake N."/>
            <person name="Inagaki H."/>
            <person name="Ikema Y."/>
            <person name="Okamoto S."/>
            <person name="Okitani R."/>
            <person name="Kawakami T."/>
            <person name="Noguchi S."/>
            <person name="Itoh T."/>
            <person name="Shigeta K."/>
            <person name="Senba T."/>
            <person name="Matsumura K."/>
            <person name="Nakajima Y."/>
            <person name="Mizuno T."/>
            <person name="Morinaga M."/>
            <person name="Sasaki M."/>
            <person name="Togashi T."/>
            <person name="Oyama M."/>
            <person name="Hata H."/>
            <person name="Watanabe M."/>
            <person name="Komatsu T."/>
            <person name="Mizushima-Sugano J."/>
            <person name="Satoh T."/>
            <person name="Shirai Y."/>
            <person name="Takahashi Y."/>
            <person name="Nakagawa K."/>
            <person name="Okumura K."/>
            <person name="Nagase T."/>
            <person name="Nomura N."/>
            <person name="Kikuchi H."/>
            <person name="Masuho Y."/>
            <person name="Yamashita R."/>
            <person name="Nakai K."/>
            <person name="Yada T."/>
            <person name="Nakamura Y."/>
            <person name="Ohara O."/>
            <person name="Isogai T."/>
            <person name="Sugano S."/>
        </authorList>
    </citation>
    <scope>NUCLEOTIDE SEQUENCE [LARGE SCALE MRNA] (ISOFORM 2)</scope>
    <source>
        <tissue>Embryo</tissue>
        <tissue>Prostate</tissue>
    </source>
</reference>
<reference key="3">
    <citation type="journal article" date="2006" name="Nature">
        <title>DNA sequence of human chromosome 17 and analysis of rearrangement in the human lineage.</title>
        <authorList>
            <person name="Zody M.C."/>
            <person name="Garber M."/>
            <person name="Adams D.J."/>
            <person name="Sharpe T."/>
            <person name="Harrow J."/>
            <person name="Lupski J.R."/>
            <person name="Nicholson C."/>
            <person name="Searle S.M."/>
            <person name="Wilming L."/>
            <person name="Young S.K."/>
            <person name="Abouelleil A."/>
            <person name="Allen N.R."/>
            <person name="Bi W."/>
            <person name="Bloom T."/>
            <person name="Borowsky M.L."/>
            <person name="Bugalter B.E."/>
            <person name="Butler J."/>
            <person name="Chang J.L."/>
            <person name="Chen C.-K."/>
            <person name="Cook A."/>
            <person name="Corum B."/>
            <person name="Cuomo C.A."/>
            <person name="de Jong P.J."/>
            <person name="DeCaprio D."/>
            <person name="Dewar K."/>
            <person name="FitzGerald M."/>
            <person name="Gilbert J."/>
            <person name="Gibson R."/>
            <person name="Gnerre S."/>
            <person name="Goldstein S."/>
            <person name="Grafham D.V."/>
            <person name="Grocock R."/>
            <person name="Hafez N."/>
            <person name="Hagopian D.S."/>
            <person name="Hart E."/>
            <person name="Norman C.H."/>
            <person name="Humphray S."/>
            <person name="Jaffe D.B."/>
            <person name="Jones M."/>
            <person name="Kamal M."/>
            <person name="Khodiyar V.K."/>
            <person name="LaButti K."/>
            <person name="Laird G."/>
            <person name="Lehoczky J."/>
            <person name="Liu X."/>
            <person name="Lokyitsang T."/>
            <person name="Loveland J."/>
            <person name="Lui A."/>
            <person name="Macdonald P."/>
            <person name="Major J.E."/>
            <person name="Matthews L."/>
            <person name="Mauceli E."/>
            <person name="McCarroll S.A."/>
            <person name="Mihalev A.H."/>
            <person name="Mudge J."/>
            <person name="Nguyen C."/>
            <person name="Nicol R."/>
            <person name="O'Leary S.B."/>
            <person name="Osoegawa K."/>
            <person name="Schwartz D.C."/>
            <person name="Shaw-Smith C."/>
            <person name="Stankiewicz P."/>
            <person name="Steward C."/>
            <person name="Swarbreck D."/>
            <person name="Venkataraman V."/>
            <person name="Whittaker C.A."/>
            <person name="Yang X."/>
            <person name="Zimmer A.R."/>
            <person name="Bradley A."/>
            <person name="Hubbard T."/>
            <person name="Birren B.W."/>
            <person name="Rogers J."/>
            <person name="Lander E.S."/>
            <person name="Nusbaum C."/>
        </authorList>
    </citation>
    <scope>NUCLEOTIDE SEQUENCE [LARGE SCALE GENOMIC DNA]</scope>
</reference>
<reference key="4">
    <citation type="journal article" date="2004" name="Genome Res.">
        <title>The status, quality, and expansion of the NIH full-length cDNA project: the Mammalian Gene Collection (MGC).</title>
        <authorList>
            <consortium name="The MGC Project Team"/>
        </authorList>
    </citation>
    <scope>NUCLEOTIDE SEQUENCE [LARGE SCALE MRNA] (ISOFORM 4)</scope>
    <scope>NUCLEOTIDE SEQUENCE [LARGE SCALE MRNA] OF 270-889 (ISOFORMS 1 AND 3)</scope>
    <scope>VARIANT GLN-889</scope>
    <source>
        <tissue>Pancreas</tissue>
    </source>
</reference>
<reference key="5">
    <citation type="journal article" date="2004" name="Int. J. Mol. Med.">
        <title>Identification and characterization of ARHGAP27 gene in silico.</title>
        <authorList>
            <person name="Katoh Y."/>
            <person name="Katoh M."/>
        </authorList>
    </citation>
    <scope>IDENTIFICATION</scope>
    <scope>TISSUE SPECIFICITY</scope>
</reference>
<reference key="6">
    <citation type="journal article" date="2014" name="J. Proteomics">
        <title>An enzyme assisted RP-RPLC approach for in-depth analysis of human liver phosphoproteome.</title>
        <authorList>
            <person name="Bian Y."/>
            <person name="Song C."/>
            <person name="Cheng K."/>
            <person name="Dong M."/>
            <person name="Wang F."/>
            <person name="Huang J."/>
            <person name="Sun D."/>
            <person name="Wang L."/>
            <person name="Ye M."/>
            <person name="Zou H."/>
        </authorList>
    </citation>
    <scope>PHOSPHORYLATION [LARGE SCALE ANALYSIS] AT SER-249 AND SER-466</scope>
    <scope>IDENTIFICATION BY MASS SPECTROMETRY [LARGE SCALE ANALYSIS]</scope>
    <source>
        <tissue>Liver</tissue>
    </source>
</reference>
<keyword id="KW-0002">3D-structure</keyword>
<keyword id="KW-0025">Alternative splicing</keyword>
<keyword id="KW-0963">Cytoplasm</keyword>
<keyword id="KW-0254">Endocytosis</keyword>
<keyword id="KW-0343">GTPase activation</keyword>
<keyword id="KW-0472">Membrane</keyword>
<keyword id="KW-0597">Phosphoprotein</keyword>
<keyword id="KW-1267">Proteomics identification</keyword>
<keyword id="KW-1185">Reference proteome</keyword>
<keyword id="KW-0677">Repeat</keyword>
<keyword id="KW-0728">SH3 domain</keyword>
<protein>
    <recommendedName>
        <fullName>Rho GTPase-activating protein 27</fullName>
    </recommendedName>
    <alternativeName>
        <fullName>CIN85-associated multi-domain-containing Rho GTPase-activating protein 1</fullName>
    </alternativeName>
    <alternativeName>
        <fullName>Rho-type GTPase-activating protein 27</fullName>
    </alternativeName>
    <alternativeName>
        <fullName>SH3 domain-containing protein 20</fullName>
    </alternativeName>
</protein>